<gene>
    <name type="primary">RRP36</name>
    <name type="ordered locus">DEHA2G23606g</name>
</gene>
<sequence length="302" mass="34702">MAKGTRGKPSVIRPSYDDDSGSDGELANVLQARDEPSDGDDDDMDSISFGALNAAQRKLDQKASKKKGGKAQRRRSDGDRDNSDDSDGDSDGSEEEGDFFETSDDNDQGYNKGKSSGRNPRKQVQKKKSKHAPSESSSKRPVSKVRDIGGLESKSMYRDIRFDPAYGKANLDEVRKNYSFLDDYRQQEVQEMEQVLKKDRNLSHFNKQKLEFKVQSLKSRLDTLNNRDLENKILSEHKKEQLAKFKSGSQANPYFLKKSDKRKLIQKAKFDNMKTSQREKVMERKRKRRLGKEFKELEFNRH</sequence>
<reference key="1">
    <citation type="journal article" date="2004" name="Nature">
        <title>Genome evolution in yeasts.</title>
        <authorList>
            <person name="Dujon B."/>
            <person name="Sherman D."/>
            <person name="Fischer G."/>
            <person name="Durrens P."/>
            <person name="Casaregola S."/>
            <person name="Lafontaine I."/>
            <person name="de Montigny J."/>
            <person name="Marck C."/>
            <person name="Neuveglise C."/>
            <person name="Talla E."/>
            <person name="Goffard N."/>
            <person name="Frangeul L."/>
            <person name="Aigle M."/>
            <person name="Anthouard V."/>
            <person name="Babour A."/>
            <person name="Barbe V."/>
            <person name="Barnay S."/>
            <person name="Blanchin S."/>
            <person name="Beckerich J.-M."/>
            <person name="Beyne E."/>
            <person name="Bleykasten C."/>
            <person name="Boisrame A."/>
            <person name="Boyer J."/>
            <person name="Cattolico L."/>
            <person name="Confanioleri F."/>
            <person name="de Daruvar A."/>
            <person name="Despons L."/>
            <person name="Fabre E."/>
            <person name="Fairhead C."/>
            <person name="Ferry-Dumazet H."/>
            <person name="Groppi A."/>
            <person name="Hantraye F."/>
            <person name="Hennequin C."/>
            <person name="Jauniaux N."/>
            <person name="Joyet P."/>
            <person name="Kachouri R."/>
            <person name="Kerrest A."/>
            <person name="Koszul R."/>
            <person name="Lemaire M."/>
            <person name="Lesur I."/>
            <person name="Ma L."/>
            <person name="Muller H."/>
            <person name="Nicaud J.-M."/>
            <person name="Nikolski M."/>
            <person name="Oztas S."/>
            <person name="Ozier-Kalogeropoulos O."/>
            <person name="Pellenz S."/>
            <person name="Potier S."/>
            <person name="Richard G.-F."/>
            <person name="Straub M.-L."/>
            <person name="Suleau A."/>
            <person name="Swennen D."/>
            <person name="Tekaia F."/>
            <person name="Wesolowski-Louvel M."/>
            <person name="Westhof E."/>
            <person name="Wirth B."/>
            <person name="Zeniou-Meyer M."/>
            <person name="Zivanovic Y."/>
            <person name="Bolotin-Fukuhara M."/>
            <person name="Thierry A."/>
            <person name="Bouchier C."/>
            <person name="Caudron B."/>
            <person name="Scarpelli C."/>
            <person name="Gaillardin C."/>
            <person name="Weissenbach J."/>
            <person name="Wincker P."/>
            <person name="Souciet J.-L."/>
        </authorList>
    </citation>
    <scope>NUCLEOTIDE SEQUENCE [LARGE SCALE GENOMIC DNA]</scope>
    <source>
        <strain>ATCC 36239 / CBS 767 / BCRC 21394 / JCM 1990 / NBRC 0083 / IGC 2968</strain>
    </source>
</reference>
<feature type="chain" id="PRO_0000397632" description="rRNA biogenesis protein RRP36">
    <location>
        <begin position="1"/>
        <end position="302"/>
    </location>
</feature>
<feature type="region of interest" description="Disordered" evidence="3">
    <location>
        <begin position="1"/>
        <end position="154"/>
    </location>
</feature>
<feature type="coiled-coil region" evidence="2">
    <location>
        <begin position="206"/>
        <end position="228"/>
    </location>
</feature>
<feature type="coiled-coil region" evidence="2">
    <location>
        <begin position="277"/>
        <end position="298"/>
    </location>
</feature>
<feature type="compositionally biased region" description="Basic residues" evidence="3">
    <location>
        <begin position="64"/>
        <end position="73"/>
    </location>
</feature>
<feature type="compositionally biased region" description="Basic and acidic residues" evidence="3">
    <location>
        <begin position="74"/>
        <end position="83"/>
    </location>
</feature>
<feature type="compositionally biased region" description="Acidic residues" evidence="3">
    <location>
        <begin position="84"/>
        <end position="107"/>
    </location>
</feature>
<feature type="compositionally biased region" description="Basic residues" evidence="3">
    <location>
        <begin position="119"/>
        <end position="131"/>
    </location>
</feature>
<feature type="compositionally biased region" description="Basic and acidic residues" evidence="3">
    <location>
        <begin position="144"/>
        <end position="154"/>
    </location>
</feature>
<organism>
    <name type="scientific">Debaryomyces hansenii (strain ATCC 36239 / CBS 767 / BCRC 21394 / JCM 1990 / NBRC 0083 / IGC 2968)</name>
    <name type="common">Yeast</name>
    <name type="synonym">Torulaspora hansenii</name>
    <dbReference type="NCBI Taxonomy" id="284592"/>
    <lineage>
        <taxon>Eukaryota</taxon>
        <taxon>Fungi</taxon>
        <taxon>Dikarya</taxon>
        <taxon>Ascomycota</taxon>
        <taxon>Saccharomycotina</taxon>
        <taxon>Pichiomycetes</taxon>
        <taxon>Debaryomycetaceae</taxon>
        <taxon>Debaryomyces</taxon>
    </lineage>
</organism>
<comment type="function">
    <text evidence="1">Component of the 90S pre-ribosome involved in the maturation of rRNAs. Required for early cleavages of the pre-RNAs in the 40S ribosomal subunit maturation pathway (By similarity).</text>
</comment>
<comment type="subunit">
    <text evidence="1">Associates with 90S and pre-40S pre-ribosomal particles.</text>
</comment>
<comment type="subcellular location">
    <subcellularLocation>
        <location evidence="1">Nucleus</location>
        <location evidence="1">Nucleolus</location>
    </subcellularLocation>
</comment>
<comment type="similarity">
    <text evidence="4">Belongs to the RRP36 family.</text>
</comment>
<proteinExistence type="inferred from homology"/>
<protein>
    <recommendedName>
        <fullName>rRNA biogenesis protein RRP36</fullName>
    </recommendedName>
    <alternativeName>
        <fullName>Ribosomal RNA-processing protein 36</fullName>
    </alternativeName>
</protein>
<evidence type="ECO:0000250" key="1"/>
<evidence type="ECO:0000255" key="2"/>
<evidence type="ECO:0000256" key="3">
    <source>
        <dbReference type="SAM" id="MobiDB-lite"/>
    </source>
</evidence>
<evidence type="ECO:0000305" key="4"/>
<dbReference type="EMBL" id="CR382139">
    <property type="protein sequence ID" value="CAG91077.1"/>
    <property type="molecule type" value="Genomic_DNA"/>
</dbReference>
<dbReference type="RefSeq" id="XP_462566.1">
    <property type="nucleotide sequence ID" value="XM_462566.1"/>
</dbReference>
<dbReference type="SMR" id="Q6BGV5"/>
<dbReference type="FunCoup" id="Q6BGV5">
    <property type="interactions" value="589"/>
</dbReference>
<dbReference type="STRING" id="284592.Q6BGV5"/>
<dbReference type="GeneID" id="2905522"/>
<dbReference type="KEGG" id="dha:DEHA2G23606g"/>
<dbReference type="VEuPathDB" id="FungiDB:DEHA2G23606g"/>
<dbReference type="eggNOG" id="KOG3190">
    <property type="taxonomic scope" value="Eukaryota"/>
</dbReference>
<dbReference type="HOGENOM" id="CLU_048802_3_0_1"/>
<dbReference type="InParanoid" id="Q6BGV5"/>
<dbReference type="OMA" id="HMKSKQR"/>
<dbReference type="OrthoDB" id="448446at2759"/>
<dbReference type="Proteomes" id="UP000000599">
    <property type="component" value="Chromosome G"/>
</dbReference>
<dbReference type="GO" id="GO:0030686">
    <property type="term" value="C:90S preribosome"/>
    <property type="evidence" value="ECO:0007669"/>
    <property type="project" value="EnsemblFungi"/>
</dbReference>
<dbReference type="GO" id="GO:0005730">
    <property type="term" value="C:nucleolus"/>
    <property type="evidence" value="ECO:0007669"/>
    <property type="project" value="UniProtKB-SubCell"/>
</dbReference>
<dbReference type="GO" id="GO:0032040">
    <property type="term" value="C:small-subunit processome"/>
    <property type="evidence" value="ECO:0007669"/>
    <property type="project" value="EnsemblFungi"/>
</dbReference>
<dbReference type="GO" id="GO:0000462">
    <property type="term" value="P:maturation of SSU-rRNA from tricistronic rRNA transcript (SSU-rRNA, 5.8S rRNA, LSU-rRNA)"/>
    <property type="evidence" value="ECO:0007669"/>
    <property type="project" value="EnsemblFungi"/>
</dbReference>
<dbReference type="InterPro" id="IPR009292">
    <property type="entry name" value="RRP36"/>
</dbReference>
<dbReference type="PANTHER" id="PTHR21738">
    <property type="entry name" value="RIBOSOMAL RNA PROCESSING PROTEIN 36 HOMOLOG"/>
    <property type="match status" value="1"/>
</dbReference>
<dbReference type="PANTHER" id="PTHR21738:SF0">
    <property type="entry name" value="RIBOSOMAL RNA PROCESSING PROTEIN 36 HOMOLOG"/>
    <property type="match status" value="1"/>
</dbReference>
<dbReference type="Pfam" id="PF06102">
    <property type="entry name" value="RRP36"/>
    <property type="match status" value="1"/>
</dbReference>
<accession>Q6BGV5</accession>
<keyword id="KW-0175">Coiled coil</keyword>
<keyword id="KW-0539">Nucleus</keyword>
<keyword id="KW-1185">Reference proteome</keyword>
<keyword id="KW-0687">Ribonucleoprotein</keyword>
<keyword id="KW-0690">Ribosome biogenesis</keyword>
<keyword id="KW-0698">rRNA processing</keyword>
<name>RRP36_DEBHA</name>